<protein>
    <recommendedName>
        <fullName evidence="4">Protein ABHD13</fullName>
        <ecNumber>3.-.-.-</ecNumber>
    </recommendedName>
    <alternativeName>
        <fullName evidence="4">Alpha/beta hydrolase domain-containing protein 13</fullName>
        <shortName evidence="2">Abhydrolase domain-containing protein 13</shortName>
    </alternativeName>
</protein>
<comment type="subcellular location">
    <subcellularLocation>
        <location evidence="4">Membrane</location>
        <topology evidence="4">Single-pass type II membrane protein</topology>
    </subcellularLocation>
</comment>
<comment type="similarity">
    <text evidence="4">Belongs to the serine esterase family.</text>
</comment>
<evidence type="ECO:0000250" key="1"/>
<evidence type="ECO:0000250" key="2">
    <source>
        <dbReference type="UniProtKB" id="Q7L211"/>
    </source>
</evidence>
<evidence type="ECO:0000255" key="3"/>
<evidence type="ECO:0000305" key="4"/>
<proteinExistence type="evidence at transcript level"/>
<organism>
    <name type="scientific">Xenopus laevis</name>
    <name type="common">African clawed frog</name>
    <dbReference type="NCBI Taxonomy" id="8355"/>
    <lineage>
        <taxon>Eukaryota</taxon>
        <taxon>Metazoa</taxon>
        <taxon>Chordata</taxon>
        <taxon>Craniata</taxon>
        <taxon>Vertebrata</taxon>
        <taxon>Euteleostomi</taxon>
        <taxon>Amphibia</taxon>
        <taxon>Batrachia</taxon>
        <taxon>Anura</taxon>
        <taxon>Pipoidea</taxon>
        <taxon>Pipidae</taxon>
        <taxon>Xenopodinae</taxon>
        <taxon>Xenopus</taxon>
        <taxon>Xenopus</taxon>
    </lineage>
</organism>
<feature type="chain" id="PRO_0000281080" description="Protein ABHD13">
    <location>
        <begin position="1"/>
        <end position="336"/>
    </location>
</feature>
<feature type="transmembrane region" description="Helical; Signal-anchor for type II membrane protein" evidence="3">
    <location>
        <begin position="37"/>
        <end position="57"/>
    </location>
</feature>
<feature type="active site" description="Charge relay system" evidence="1">
    <location>
        <position position="193"/>
    </location>
</feature>
<feature type="active site" description="Charge relay system" evidence="1">
    <location>
        <position position="268"/>
    </location>
</feature>
<feature type="active site" description="Charge relay system" evidence="1">
    <location>
        <position position="298"/>
    </location>
</feature>
<feature type="glycosylation site" description="N-linked (GlcNAc...) asparagine" evidence="3">
    <location>
        <position position="299"/>
    </location>
</feature>
<accession>Q6IRP4</accession>
<sequence length="336" mass="38262">MEKHWVLWSCAERWLLALASWSWGLCRICLLPLILTFNMYGGVILLLLIFVSIAGILFKFQDVLLYFPDQPSSSRLYIPMPTGIPHENIFIKTKDNIRLNLILLRYTGDNSSFSPTIIYFHGNAGNIGHRLPNALLMLVNLKVNLILVDYRGYGKSDGEPSEEGLYMDSEAVLDYVMTRPDIDKTKIILFGRSLGGAVAIHLASENAHRICALVLENTFLSIPHMASTLFSVLPMRYLPLWCYKNKFLSYRKIVQCRMPSLFISGLSDQLIPPFMMKQLYELSPSRTKRLAIFPDGTHNDTWQCQGYFTALEQFIKELNSNHCPEANAKTSNVTII</sequence>
<keyword id="KW-0325">Glycoprotein</keyword>
<keyword id="KW-0378">Hydrolase</keyword>
<keyword id="KW-0472">Membrane</keyword>
<keyword id="KW-1185">Reference proteome</keyword>
<keyword id="KW-0735">Signal-anchor</keyword>
<keyword id="KW-0812">Transmembrane</keyword>
<keyword id="KW-1133">Transmembrane helix</keyword>
<name>ABHDD_XENLA</name>
<reference key="1">
    <citation type="submission" date="2004-05" db="EMBL/GenBank/DDBJ databases">
        <authorList>
            <consortium name="NIH - Xenopus Gene Collection (XGC) project"/>
        </authorList>
    </citation>
    <scope>NUCLEOTIDE SEQUENCE [LARGE SCALE MRNA]</scope>
    <source>
        <tissue>Ovary</tissue>
    </source>
</reference>
<gene>
    <name evidence="2" type="primary">abhd13</name>
</gene>
<dbReference type="EC" id="3.-.-.-"/>
<dbReference type="EMBL" id="BC070690">
    <property type="protein sequence ID" value="AAH70690.1"/>
    <property type="molecule type" value="mRNA"/>
</dbReference>
<dbReference type="RefSeq" id="NP_001084991.1">
    <property type="nucleotide sequence ID" value="NM_001091522.1"/>
</dbReference>
<dbReference type="RefSeq" id="XP_018103692.1">
    <property type="nucleotide sequence ID" value="XM_018248203.1"/>
</dbReference>
<dbReference type="RefSeq" id="XP_018103693.1">
    <property type="nucleotide sequence ID" value="XM_018248204.1"/>
</dbReference>
<dbReference type="SMR" id="Q6IRP4"/>
<dbReference type="ESTHER" id="xenla-q6irp4">
    <property type="family name" value="ABHD13-BEM46"/>
</dbReference>
<dbReference type="GlyCosmos" id="Q6IRP4">
    <property type="glycosylation" value="1 site, No reported glycans"/>
</dbReference>
<dbReference type="DNASU" id="432053"/>
<dbReference type="GeneID" id="432053"/>
<dbReference type="KEGG" id="xla:432053"/>
<dbReference type="AGR" id="Xenbase:XB-GENE-5936195"/>
<dbReference type="CTD" id="432053"/>
<dbReference type="Xenbase" id="XB-GENE-5936195">
    <property type="gene designation" value="abhd13.S"/>
</dbReference>
<dbReference type="OMA" id="QYWTSED"/>
<dbReference type="OrthoDB" id="10249433at2759"/>
<dbReference type="Proteomes" id="UP000186698">
    <property type="component" value="Chromosome 2S"/>
</dbReference>
<dbReference type="Bgee" id="432053">
    <property type="expression patterns" value="Expressed in blastula and 19 other cell types or tissues"/>
</dbReference>
<dbReference type="GO" id="GO:0016020">
    <property type="term" value="C:membrane"/>
    <property type="evidence" value="ECO:0000318"/>
    <property type="project" value="GO_Central"/>
</dbReference>
<dbReference type="GO" id="GO:0008474">
    <property type="term" value="F:palmitoyl-(protein) hydrolase activity"/>
    <property type="evidence" value="ECO:0000318"/>
    <property type="project" value="GO_Central"/>
</dbReference>
<dbReference type="FunFam" id="3.40.50.1820:FF:000058">
    <property type="entry name" value="Alpha/beta hydrolase domain-containing protein 13"/>
    <property type="match status" value="1"/>
</dbReference>
<dbReference type="Gene3D" id="3.40.50.1820">
    <property type="entry name" value="alpha/beta hydrolase"/>
    <property type="match status" value="1"/>
</dbReference>
<dbReference type="InterPro" id="IPR000073">
    <property type="entry name" value="AB_hydrolase_1"/>
</dbReference>
<dbReference type="InterPro" id="IPR029058">
    <property type="entry name" value="AB_hydrolase_fold"/>
</dbReference>
<dbReference type="PANTHER" id="PTHR12277">
    <property type="entry name" value="ALPHA/BETA HYDROLASE DOMAIN-CONTAINING PROTEIN"/>
    <property type="match status" value="1"/>
</dbReference>
<dbReference type="PANTHER" id="PTHR12277:SF81">
    <property type="entry name" value="PROTEIN ABHD13"/>
    <property type="match status" value="1"/>
</dbReference>
<dbReference type="Pfam" id="PF00561">
    <property type="entry name" value="Abhydrolase_1"/>
    <property type="match status" value="1"/>
</dbReference>
<dbReference type="PRINTS" id="PR00111">
    <property type="entry name" value="ABHYDROLASE"/>
</dbReference>
<dbReference type="SUPFAM" id="SSF53474">
    <property type="entry name" value="alpha/beta-Hydrolases"/>
    <property type="match status" value="1"/>
</dbReference>